<name>ACEA_CANTR</name>
<dbReference type="EC" id="4.1.3.1" evidence="1"/>
<dbReference type="EC" id="4.1.3.30" evidence="1"/>
<dbReference type="EMBL" id="D00703">
    <property type="protein sequence ID" value="BAA00611.1"/>
    <property type="molecule type" value="Genomic_DNA"/>
</dbReference>
<dbReference type="PIR" id="JX0105">
    <property type="entry name" value="WZCKI"/>
</dbReference>
<dbReference type="SMR" id="P20014"/>
<dbReference type="VEuPathDB" id="FungiDB:CTMYA2_028160"/>
<dbReference type="VEuPathDB" id="FungiDB:CTRG_04702"/>
<dbReference type="UniPathway" id="UPA00703">
    <property type="reaction ID" value="UER00719"/>
</dbReference>
<dbReference type="GO" id="GO:0009514">
    <property type="term" value="C:glyoxysome"/>
    <property type="evidence" value="ECO:0007669"/>
    <property type="project" value="UniProtKB-SubCell"/>
</dbReference>
<dbReference type="GO" id="GO:0004451">
    <property type="term" value="F:isocitrate lyase activity"/>
    <property type="evidence" value="ECO:0007669"/>
    <property type="project" value="UniProtKB-EC"/>
</dbReference>
<dbReference type="GO" id="GO:0046872">
    <property type="term" value="F:metal ion binding"/>
    <property type="evidence" value="ECO:0007669"/>
    <property type="project" value="UniProtKB-KW"/>
</dbReference>
<dbReference type="GO" id="GO:0046421">
    <property type="term" value="F:methylisocitrate lyase activity"/>
    <property type="evidence" value="ECO:0007669"/>
    <property type="project" value="UniProtKB-EC"/>
</dbReference>
<dbReference type="GO" id="GO:0006097">
    <property type="term" value="P:glyoxylate cycle"/>
    <property type="evidence" value="ECO:0007669"/>
    <property type="project" value="UniProtKB-UniPathway"/>
</dbReference>
<dbReference type="GO" id="GO:0006099">
    <property type="term" value="P:tricarboxylic acid cycle"/>
    <property type="evidence" value="ECO:0007669"/>
    <property type="project" value="UniProtKB-KW"/>
</dbReference>
<dbReference type="CDD" id="cd00377">
    <property type="entry name" value="ICL_PEPM"/>
    <property type="match status" value="1"/>
</dbReference>
<dbReference type="FunFam" id="1.10.10.850:FF:000001">
    <property type="entry name" value="Isocitrate lyase"/>
    <property type="match status" value="1"/>
</dbReference>
<dbReference type="Gene3D" id="1.10.10.850">
    <property type="match status" value="1"/>
</dbReference>
<dbReference type="Gene3D" id="3.20.20.60">
    <property type="entry name" value="Phosphoenolpyruvate-binding domains"/>
    <property type="match status" value="1"/>
</dbReference>
<dbReference type="InterPro" id="IPR039556">
    <property type="entry name" value="ICL/PEPM"/>
</dbReference>
<dbReference type="InterPro" id="IPR006254">
    <property type="entry name" value="Isocitrate_lyase"/>
</dbReference>
<dbReference type="InterPro" id="IPR018523">
    <property type="entry name" value="Isocitrate_lyase_ph_CS"/>
</dbReference>
<dbReference type="InterPro" id="IPR015813">
    <property type="entry name" value="Pyrv/PenolPyrv_kinase-like_dom"/>
</dbReference>
<dbReference type="InterPro" id="IPR040442">
    <property type="entry name" value="Pyrv_kinase-like_dom_sf"/>
</dbReference>
<dbReference type="NCBIfam" id="TIGR01346">
    <property type="entry name" value="isocit_lyase"/>
    <property type="match status" value="1"/>
</dbReference>
<dbReference type="PANTHER" id="PTHR21631:SF3">
    <property type="entry name" value="BIFUNCTIONAL GLYOXYLATE CYCLE PROTEIN"/>
    <property type="match status" value="1"/>
</dbReference>
<dbReference type="PANTHER" id="PTHR21631">
    <property type="entry name" value="ISOCITRATE LYASE/MALATE SYNTHASE"/>
    <property type="match status" value="1"/>
</dbReference>
<dbReference type="Pfam" id="PF00463">
    <property type="entry name" value="ICL"/>
    <property type="match status" value="1"/>
</dbReference>
<dbReference type="PIRSF" id="PIRSF001362">
    <property type="entry name" value="Isocit_lyase"/>
    <property type="match status" value="1"/>
</dbReference>
<dbReference type="SUPFAM" id="SSF51621">
    <property type="entry name" value="Phosphoenolpyruvate/pyruvate domain"/>
    <property type="match status" value="1"/>
</dbReference>
<dbReference type="PROSITE" id="PS00161">
    <property type="entry name" value="ISOCITRATE_LYASE"/>
    <property type="match status" value="1"/>
</dbReference>
<proteinExistence type="inferred from homology"/>
<gene>
    <name evidence="5" type="primary">ICL1</name>
</gene>
<keyword id="KW-0329">Glyoxylate bypass</keyword>
<keyword id="KW-0330">Glyoxysome</keyword>
<keyword id="KW-0456">Lyase</keyword>
<keyword id="KW-0460">Magnesium</keyword>
<keyword id="KW-0479">Metal-binding</keyword>
<keyword id="KW-0576">Peroxisome</keyword>
<keyword id="KW-0816">Tricarboxylic acid cycle</keyword>
<feature type="chain" id="PRO_0000068786" description="Isocitrate lyase">
    <location>
        <begin position="1"/>
        <end position="550"/>
    </location>
</feature>
<feature type="short sequence motif" description="Microbody targeting signal" evidence="4">
    <location>
        <begin position="548"/>
        <end position="550"/>
    </location>
</feature>
<feature type="active site" description="Proton acceptor" evidence="3">
    <location>
        <position position="210"/>
    </location>
</feature>
<feature type="binding site" evidence="3">
    <location>
        <begin position="101"/>
        <end position="103"/>
    </location>
    <ligand>
        <name>substrate</name>
    </ligand>
</feature>
<feature type="binding site" evidence="3">
    <location>
        <position position="172"/>
    </location>
    <ligand>
        <name>Mg(2+)</name>
        <dbReference type="ChEBI" id="CHEBI:18420"/>
    </ligand>
</feature>
<feature type="binding site" evidence="3">
    <location>
        <begin position="211"/>
        <end position="212"/>
    </location>
    <ligand>
        <name>substrate</name>
    </ligand>
</feature>
<feature type="binding site" evidence="3">
    <location>
        <position position="247"/>
    </location>
    <ligand>
        <name>substrate</name>
    </ligand>
</feature>
<feature type="binding site" evidence="3">
    <location>
        <begin position="430"/>
        <end position="434"/>
    </location>
    <ligand>
        <name>substrate</name>
    </ligand>
</feature>
<feature type="binding site" evidence="3">
    <location>
        <position position="464"/>
    </location>
    <ligand>
        <name>substrate</name>
    </ligand>
</feature>
<evidence type="ECO:0000250" key="1">
    <source>
        <dbReference type="UniProtKB" id="P28240"/>
    </source>
</evidence>
<evidence type="ECO:0000250" key="2">
    <source>
        <dbReference type="UniProtKB" id="P28299"/>
    </source>
</evidence>
<evidence type="ECO:0000250" key="3">
    <source>
        <dbReference type="UniProtKB" id="P9WKK7"/>
    </source>
</evidence>
<evidence type="ECO:0000255" key="4"/>
<evidence type="ECO:0000303" key="5">
    <source>
    </source>
</evidence>
<evidence type="ECO:0000305" key="6"/>
<accession>P20014</accession>
<reference key="1">
    <citation type="journal article" date="1990" name="J. Biochem.">
        <title>Peroxisomal isocitrate lyase of the n-alkane-assimilating yeast Candida tropicalis: gene analysis and characterization.</title>
        <authorList>
            <person name="Atomi H."/>
            <person name="Ueda M."/>
            <person name="Hikida M."/>
            <person name="Hishida T."/>
            <person name="Teranishi Y."/>
            <person name="Tanaka A."/>
        </authorList>
    </citation>
    <scope>NUCLEOTIDE SEQUENCE [GENOMIC DNA]</scope>
</reference>
<protein>
    <recommendedName>
        <fullName evidence="5">Isocitrate lyase</fullName>
        <shortName evidence="6">ICL</shortName>
        <shortName evidence="6">Isocitrase</shortName>
        <shortName evidence="6">Isocitratase</shortName>
        <ecNumber evidence="1">4.1.3.1</ecNumber>
    </recommendedName>
    <alternativeName>
        <fullName evidence="1">Methylisocitrate lyase</fullName>
        <shortName evidence="6">MICA</shortName>
        <ecNumber evidence="1">4.1.3.30</ecNumber>
    </alternativeName>
    <alternativeName>
        <fullName evidence="6">Threo-D(S)-isocitrate glyoxylate-lyase</fullName>
    </alternativeName>
</protein>
<sequence length="550" mass="61577">MAYTKIDINQEEADFQKEVAEIKKWWSEPRWRKTKRIYSAEDIAKKRGTLKIAYPSSQQSDKLFKLLEKHDAEKSVSFTFGALDPIHVAQMAKYLDSIYVSGWQCSSTASTSNEPSPDLADYPMDTVPNKVEHLWFAQLFHDRKQREERLNMTKEERANTPYIDFLRPIIADADTGHGGITAIIKLTKLFIERGAAGIHIEDQAPGTKKCGHMAGKVLVPVQEHINRLVAIRASADIFGSNLLAVARTDSEAATLITSTIDHRDHYFIIGATNPESGDLAALMAEAEAKGIYGDELARIETEWTKKAGLKLFHEAVIDEIKAGNYSNKEALIKKFTDKVNPLSHTSHKEAKKLAKELTGKDIYFNWDVARAREGYYRYQGGTQCAVMRGRAFAPYADLIWMESALPDYNQAKEFADGVKAAVPDQWLAYNLSPSFNWNKAMPADEQETYIKRLGQLGYVWQFITLAGLHTTALAVDDFANQYSQIGMRAYGQTVQQPEIEKGVEVVKHQKWSGANYIDGLLRMVSGGVTSTAAMGAGVTEDQFKETKAKV</sequence>
<organism>
    <name type="scientific">Candida tropicalis</name>
    <name type="common">Yeast</name>
    <dbReference type="NCBI Taxonomy" id="5482"/>
    <lineage>
        <taxon>Eukaryota</taxon>
        <taxon>Fungi</taxon>
        <taxon>Dikarya</taxon>
        <taxon>Ascomycota</taxon>
        <taxon>Saccharomycotina</taxon>
        <taxon>Pichiomycetes</taxon>
        <taxon>Debaryomycetaceae</taxon>
        <taxon>Candida/Lodderomyces clade</taxon>
        <taxon>Candida</taxon>
    </lineage>
</organism>
<comment type="function">
    <text evidence="1">Catalyzes the formation of succinate and glyoxylate from isocitrate, a key step of the glyoxylate cycle, which operates as an anaplerotic route for replenishing the tricarboxylic acid cycle. Required for growth on ethanol or acetate, but dispensable when fermentable carbon sources are available. Also acts on 2-methylisocitrate.</text>
</comment>
<comment type="catalytic activity">
    <reaction evidence="1">
        <text>D-threo-isocitrate = glyoxylate + succinate</text>
        <dbReference type="Rhea" id="RHEA:13245"/>
        <dbReference type="ChEBI" id="CHEBI:15562"/>
        <dbReference type="ChEBI" id="CHEBI:30031"/>
        <dbReference type="ChEBI" id="CHEBI:36655"/>
        <dbReference type="EC" id="4.1.3.1"/>
    </reaction>
</comment>
<comment type="catalytic activity">
    <reaction evidence="1">
        <text>(2S,3R)-3-hydroxybutane-1,2,3-tricarboxylate = pyruvate + succinate</text>
        <dbReference type="Rhea" id="RHEA:16809"/>
        <dbReference type="ChEBI" id="CHEBI:15361"/>
        <dbReference type="ChEBI" id="CHEBI:30031"/>
        <dbReference type="ChEBI" id="CHEBI:57429"/>
        <dbReference type="EC" id="4.1.3.30"/>
    </reaction>
</comment>
<comment type="cofactor">
    <cofactor evidence="3">
        <name>Mg(2+)</name>
        <dbReference type="ChEBI" id="CHEBI:18420"/>
    </cofactor>
</comment>
<comment type="pathway">
    <text>Carbohydrate metabolism; glyoxylate cycle; (S)-malate from isocitrate: step 1/2.</text>
</comment>
<comment type="subunit">
    <text evidence="1">Homotetramer.</text>
</comment>
<comment type="subcellular location">
    <subcellularLocation>
        <location evidence="2">Glyoxysome</location>
    </subcellularLocation>
</comment>
<comment type="similarity">
    <text evidence="6">Belongs to the isocitrate lyase/PEP mutase superfamily. Isocitrate lyase family.</text>
</comment>